<proteinExistence type="inferred from homology"/>
<organism>
    <name type="scientific">Methylococcus capsulatus (strain ATCC 33009 / NCIMB 11132 / Bath)</name>
    <dbReference type="NCBI Taxonomy" id="243233"/>
    <lineage>
        <taxon>Bacteria</taxon>
        <taxon>Pseudomonadati</taxon>
        <taxon>Pseudomonadota</taxon>
        <taxon>Gammaproteobacteria</taxon>
        <taxon>Methylococcales</taxon>
        <taxon>Methylococcaceae</taxon>
        <taxon>Methylococcus</taxon>
    </lineage>
</organism>
<protein>
    <recommendedName>
        <fullName evidence="1">Protein Smg homolog</fullName>
    </recommendedName>
</protein>
<dbReference type="EMBL" id="AE017282">
    <property type="protein sequence ID" value="AAU91142.1"/>
    <property type="molecule type" value="Genomic_DNA"/>
</dbReference>
<dbReference type="RefSeq" id="WP_010962039.1">
    <property type="nucleotide sequence ID" value="NC_002977.6"/>
</dbReference>
<dbReference type="SMR" id="Q603G6"/>
<dbReference type="STRING" id="243233.MCA2840"/>
<dbReference type="GeneID" id="88225015"/>
<dbReference type="KEGG" id="mca:MCA2840"/>
<dbReference type="eggNOG" id="COG2922">
    <property type="taxonomic scope" value="Bacteria"/>
</dbReference>
<dbReference type="HOGENOM" id="CLU_133242_0_0_6"/>
<dbReference type="Proteomes" id="UP000006821">
    <property type="component" value="Chromosome"/>
</dbReference>
<dbReference type="HAMAP" id="MF_00598">
    <property type="entry name" value="Smg"/>
    <property type="match status" value="1"/>
</dbReference>
<dbReference type="InterPro" id="IPR007456">
    <property type="entry name" value="Smg"/>
</dbReference>
<dbReference type="PANTHER" id="PTHR38692">
    <property type="entry name" value="PROTEIN SMG"/>
    <property type="match status" value="1"/>
</dbReference>
<dbReference type="PANTHER" id="PTHR38692:SF1">
    <property type="entry name" value="PROTEIN SMG"/>
    <property type="match status" value="1"/>
</dbReference>
<dbReference type="Pfam" id="PF04361">
    <property type="entry name" value="DUF494"/>
    <property type="match status" value="1"/>
</dbReference>
<name>SMG_METCA</name>
<comment type="similarity">
    <text evidence="1">Belongs to the Smg family.</text>
</comment>
<evidence type="ECO:0000255" key="1">
    <source>
        <dbReference type="HAMAP-Rule" id="MF_00598"/>
    </source>
</evidence>
<gene>
    <name evidence="1" type="primary">smg</name>
    <name type="ordered locus">MCA2840</name>
</gene>
<accession>Q603G6</accession>
<keyword id="KW-1185">Reference proteome</keyword>
<sequence length="155" mass="17988">MKENVFDVLIYLFENYLDRDTEQAPDPDEMRTELLEAGFPQREINRAFDWLETLGAQQPMRAASLPAFRIFSSEELAKLDVECRGFLMFLEQNGILTAASREVVIDRLMALNEEIISLENLKWVVLMVLFSQPSEEVAFARMENLVYESFPGYIH</sequence>
<feature type="chain" id="PRO_1000025653" description="Protein Smg homolog">
    <location>
        <begin position="1"/>
        <end position="155"/>
    </location>
</feature>
<reference key="1">
    <citation type="journal article" date="2004" name="PLoS Biol.">
        <title>Genomic insights into methanotrophy: the complete genome sequence of Methylococcus capsulatus (Bath).</title>
        <authorList>
            <person name="Ward N.L."/>
            <person name="Larsen O."/>
            <person name="Sakwa J."/>
            <person name="Bruseth L."/>
            <person name="Khouri H.M."/>
            <person name="Durkin A.S."/>
            <person name="Dimitrov G."/>
            <person name="Jiang L."/>
            <person name="Scanlan D."/>
            <person name="Kang K.H."/>
            <person name="Lewis M.R."/>
            <person name="Nelson K.E."/>
            <person name="Methe B.A."/>
            <person name="Wu M."/>
            <person name="Heidelberg J.F."/>
            <person name="Paulsen I.T."/>
            <person name="Fouts D.E."/>
            <person name="Ravel J."/>
            <person name="Tettelin H."/>
            <person name="Ren Q."/>
            <person name="Read T.D."/>
            <person name="DeBoy R.T."/>
            <person name="Seshadri R."/>
            <person name="Salzberg S.L."/>
            <person name="Jensen H.B."/>
            <person name="Birkeland N.K."/>
            <person name="Nelson W.C."/>
            <person name="Dodson R.J."/>
            <person name="Grindhaug S.H."/>
            <person name="Holt I.E."/>
            <person name="Eidhammer I."/>
            <person name="Jonasen I."/>
            <person name="Vanaken S."/>
            <person name="Utterback T.R."/>
            <person name="Feldblyum T.V."/>
            <person name="Fraser C.M."/>
            <person name="Lillehaug J.R."/>
            <person name="Eisen J.A."/>
        </authorList>
    </citation>
    <scope>NUCLEOTIDE SEQUENCE [LARGE SCALE GENOMIC DNA]</scope>
    <source>
        <strain>ATCC 33009 / NCIMB 11132 / Bath</strain>
    </source>
</reference>